<geneLocation type="chloroplast"/>
<reference key="1">
    <citation type="submission" date="2007-03" db="EMBL/GenBank/DDBJ databases">
        <title>Sequencing analysis of Lepidium virginicum JO26 chloroplast DNA.</title>
        <authorList>
            <person name="Hosouchi T."/>
            <person name="Tsuruoka H."/>
            <person name="Kotani H."/>
        </authorList>
    </citation>
    <scope>NUCLEOTIDE SEQUENCE [LARGE SCALE GENOMIC DNA]</scope>
</reference>
<comment type="function">
    <text evidence="2">Component of the cytochrome b6-f complex, which mediates electron transfer between photosystem II (PSII) and photosystem I (PSI), cyclic electron flow around PSI, and state transitions.</text>
</comment>
<comment type="cofactor">
    <cofactor evidence="2">
        <name>heme</name>
        <dbReference type="ChEBI" id="CHEBI:30413"/>
    </cofactor>
    <text evidence="2">Binds 1 heme group covalently.</text>
</comment>
<comment type="subunit">
    <text evidence="1">The 4 large subunits of the cytochrome b6-f complex are cytochrome b6, subunit IV (17 kDa polypeptide, petD), cytochrome f and the Rieske protein, while the 4 small subunits are PetG, PetL, PetM and PetN. The complex functions as a dimer (By similarity).</text>
</comment>
<comment type="subcellular location">
    <subcellularLocation>
        <location evidence="2">Plastid</location>
        <location evidence="2">Chloroplast thylakoid membrane</location>
        <topology evidence="2">Single-pass membrane protein</topology>
    </subcellularLocation>
</comment>
<comment type="similarity">
    <text evidence="2">Belongs to the cytochrome f family.</text>
</comment>
<protein>
    <recommendedName>
        <fullName evidence="2">Cytochrome f</fullName>
    </recommendedName>
</protein>
<keyword id="KW-0150">Chloroplast</keyword>
<keyword id="KW-0249">Electron transport</keyword>
<keyword id="KW-0349">Heme</keyword>
<keyword id="KW-0408">Iron</keyword>
<keyword id="KW-0472">Membrane</keyword>
<keyword id="KW-0479">Metal-binding</keyword>
<keyword id="KW-0602">Photosynthesis</keyword>
<keyword id="KW-0934">Plastid</keyword>
<keyword id="KW-0732">Signal</keyword>
<keyword id="KW-0793">Thylakoid</keyword>
<keyword id="KW-0812">Transmembrane</keyword>
<keyword id="KW-1133">Transmembrane helix</keyword>
<keyword id="KW-0813">Transport</keyword>
<accession>A4QLB9</accession>
<evidence type="ECO:0000250" key="1"/>
<evidence type="ECO:0000255" key="2">
    <source>
        <dbReference type="HAMAP-Rule" id="MF_00610"/>
    </source>
</evidence>
<dbReference type="EMBL" id="AP009374">
    <property type="protein sequence ID" value="BAF50474.1"/>
    <property type="molecule type" value="Genomic_DNA"/>
</dbReference>
<dbReference type="RefSeq" id="YP_001123650.1">
    <property type="nucleotide sequence ID" value="NC_009273.1"/>
</dbReference>
<dbReference type="SMR" id="A4QLB9"/>
<dbReference type="GeneID" id="4961968"/>
<dbReference type="GO" id="GO:0009535">
    <property type="term" value="C:chloroplast thylakoid membrane"/>
    <property type="evidence" value="ECO:0007669"/>
    <property type="project" value="UniProtKB-SubCell"/>
</dbReference>
<dbReference type="GO" id="GO:0009055">
    <property type="term" value="F:electron transfer activity"/>
    <property type="evidence" value="ECO:0007669"/>
    <property type="project" value="UniProtKB-UniRule"/>
</dbReference>
<dbReference type="GO" id="GO:0020037">
    <property type="term" value="F:heme binding"/>
    <property type="evidence" value="ECO:0007669"/>
    <property type="project" value="InterPro"/>
</dbReference>
<dbReference type="GO" id="GO:0005506">
    <property type="term" value="F:iron ion binding"/>
    <property type="evidence" value="ECO:0007669"/>
    <property type="project" value="InterPro"/>
</dbReference>
<dbReference type="GO" id="GO:0015979">
    <property type="term" value="P:photosynthesis"/>
    <property type="evidence" value="ECO:0007669"/>
    <property type="project" value="UniProtKB-UniRule"/>
</dbReference>
<dbReference type="FunFam" id="1.20.5.700:FF:000001">
    <property type="entry name" value="Cytochrome f"/>
    <property type="match status" value="1"/>
</dbReference>
<dbReference type="FunFam" id="2.40.50.100:FF:000007">
    <property type="entry name" value="Cytochrome f"/>
    <property type="match status" value="1"/>
</dbReference>
<dbReference type="FunFam" id="2.60.40.830:FF:000001">
    <property type="entry name" value="Cytochrome f"/>
    <property type="match status" value="1"/>
</dbReference>
<dbReference type="Gene3D" id="2.40.50.100">
    <property type="match status" value="1"/>
</dbReference>
<dbReference type="Gene3D" id="2.60.40.830">
    <property type="entry name" value="Cytochrome f large domain"/>
    <property type="match status" value="1"/>
</dbReference>
<dbReference type="Gene3D" id="1.20.5.700">
    <property type="entry name" value="Single helix bin"/>
    <property type="match status" value="1"/>
</dbReference>
<dbReference type="HAMAP" id="MF_00610">
    <property type="entry name" value="Cytb6_f_cytF"/>
    <property type="match status" value="1"/>
</dbReference>
<dbReference type="InterPro" id="IPR024058">
    <property type="entry name" value="Cyt-f_TM"/>
</dbReference>
<dbReference type="InterPro" id="IPR002325">
    <property type="entry name" value="Cyt_f"/>
</dbReference>
<dbReference type="InterPro" id="IPR024094">
    <property type="entry name" value="Cyt_f_lg_dom"/>
</dbReference>
<dbReference type="InterPro" id="IPR036826">
    <property type="entry name" value="Cyt_f_lg_dom_sf"/>
</dbReference>
<dbReference type="InterPro" id="IPR011054">
    <property type="entry name" value="Rudment_hybrid_motif"/>
</dbReference>
<dbReference type="PANTHER" id="PTHR33288">
    <property type="match status" value="1"/>
</dbReference>
<dbReference type="PANTHER" id="PTHR33288:SF10">
    <property type="entry name" value="CYTOCHROME F"/>
    <property type="match status" value="1"/>
</dbReference>
<dbReference type="Pfam" id="PF01333">
    <property type="entry name" value="Apocytochr_F_C"/>
    <property type="match status" value="1"/>
</dbReference>
<dbReference type="Pfam" id="PF16639">
    <property type="entry name" value="Apocytochr_F_N"/>
    <property type="match status" value="1"/>
</dbReference>
<dbReference type="PRINTS" id="PR00610">
    <property type="entry name" value="CYTOCHROMEF"/>
</dbReference>
<dbReference type="SUPFAM" id="SSF103431">
    <property type="entry name" value="Cytochrome f subunit of the cytochrome b6f complex, transmembrane anchor"/>
    <property type="match status" value="1"/>
</dbReference>
<dbReference type="SUPFAM" id="SSF49441">
    <property type="entry name" value="Cytochrome f, large domain"/>
    <property type="match status" value="1"/>
</dbReference>
<dbReference type="SUPFAM" id="SSF51246">
    <property type="entry name" value="Rudiment single hybrid motif"/>
    <property type="match status" value="1"/>
</dbReference>
<dbReference type="PROSITE" id="PS51010">
    <property type="entry name" value="CYTF"/>
    <property type="match status" value="1"/>
</dbReference>
<sequence length="320" mass="35446">MQTRNTFSWIREEITRSISVSLMIYIITWASISSAYPIFAQQNYENPREATGRIVCANCHLANKPVDIEVPQTVLPDTVFEAVVKIPYDMQLKQVLANGKKGALNVGAVLILPEGFELAPPDRISPEMKEKIGNLSFQNYRPNKKNILVIGPVPGQKYSEITFPILAPDPATNKDVHFLKYPIYVGGNRGRGQIYPDGSKSNNTVYNATAGGIISKILRKEKGGYEITIVDASNERQVIDIIPRGLELLVSEGESIKLDQPLTSNPNVGGFGQGDAEIVLQDPLRVQGLLFFLGSVVLAQIFLVLKKKQFEKVQLSEMNF</sequence>
<organism>
    <name type="scientific">Lepidium virginicum</name>
    <name type="common">Virginia pepperweed</name>
    <dbReference type="NCBI Taxonomy" id="59292"/>
    <lineage>
        <taxon>Eukaryota</taxon>
        <taxon>Viridiplantae</taxon>
        <taxon>Streptophyta</taxon>
        <taxon>Embryophyta</taxon>
        <taxon>Tracheophyta</taxon>
        <taxon>Spermatophyta</taxon>
        <taxon>Magnoliopsida</taxon>
        <taxon>eudicotyledons</taxon>
        <taxon>Gunneridae</taxon>
        <taxon>Pentapetalae</taxon>
        <taxon>rosids</taxon>
        <taxon>malvids</taxon>
        <taxon>Brassicales</taxon>
        <taxon>Brassicaceae</taxon>
        <taxon>Lepidieae</taxon>
        <taxon>Lepidium</taxon>
    </lineage>
</organism>
<gene>
    <name evidence="2" type="primary">petA</name>
</gene>
<name>CYF_LEPVR</name>
<feature type="signal peptide" evidence="2">
    <location>
        <begin position="1"/>
        <end position="35"/>
    </location>
</feature>
<feature type="chain" id="PRO_0000342068" description="Cytochrome f">
    <location>
        <begin position="36"/>
        <end position="320"/>
    </location>
</feature>
<feature type="transmembrane region" description="Helical" evidence="2">
    <location>
        <begin position="286"/>
        <end position="306"/>
    </location>
</feature>
<feature type="binding site" description="axial binding residue" evidence="2">
    <location>
        <position position="36"/>
    </location>
    <ligand>
        <name>heme</name>
        <dbReference type="ChEBI" id="CHEBI:30413"/>
    </ligand>
    <ligandPart>
        <name>Fe</name>
        <dbReference type="ChEBI" id="CHEBI:18248"/>
    </ligandPart>
</feature>
<feature type="binding site" description="covalent" evidence="2">
    <location>
        <position position="56"/>
    </location>
    <ligand>
        <name>heme</name>
        <dbReference type="ChEBI" id="CHEBI:30413"/>
    </ligand>
</feature>
<feature type="binding site" description="covalent" evidence="2">
    <location>
        <position position="59"/>
    </location>
    <ligand>
        <name>heme</name>
        <dbReference type="ChEBI" id="CHEBI:30413"/>
    </ligand>
</feature>
<feature type="binding site" description="axial binding residue" evidence="2">
    <location>
        <position position="60"/>
    </location>
    <ligand>
        <name>heme</name>
        <dbReference type="ChEBI" id="CHEBI:30413"/>
    </ligand>
    <ligandPart>
        <name>Fe</name>
        <dbReference type="ChEBI" id="CHEBI:18248"/>
    </ligandPart>
</feature>
<proteinExistence type="inferred from homology"/>